<feature type="chain" id="PRO_1000075944" description="2-C-methyl-D-erythritol 4-phosphate cytidylyltransferase">
    <location>
        <begin position="1"/>
        <end position="231"/>
    </location>
</feature>
<feature type="site" description="Transition state stabilizer" evidence="1">
    <location>
        <position position="20"/>
    </location>
</feature>
<feature type="site" description="Transition state stabilizer" evidence="1">
    <location>
        <position position="27"/>
    </location>
</feature>
<feature type="site" description="Positions MEP for the nucleophilic attack" evidence="1">
    <location>
        <position position="156"/>
    </location>
</feature>
<feature type="site" description="Positions MEP for the nucleophilic attack" evidence="1">
    <location>
        <position position="212"/>
    </location>
</feature>
<sequence>MSQTPKHIISIVPAAGIGSRMGAEIPKQYLQLNEQSILGHTLDCLLSHPSIEKVIVALNPEDEFFARLPQAQHAKLQAVIGGKERADSVLSALTVAPTDAWALVHDAARPCLNHQDIDKLIESASSFPQGAILGAPVRDTMKRSNAQGLITETVCREKLWHALTPQFFPVQNLKQNLSNALAAGALITDEASAMEWAGVAPGIVAGRADNIKVTHPDDLQLASLFLKSAAQ</sequence>
<dbReference type="EC" id="2.7.7.60" evidence="1"/>
<dbReference type="EMBL" id="CP000851">
    <property type="protein sequence ID" value="ABV86514.1"/>
    <property type="molecule type" value="Genomic_DNA"/>
</dbReference>
<dbReference type="RefSeq" id="WP_012154441.1">
    <property type="nucleotide sequence ID" value="NC_009901.1"/>
</dbReference>
<dbReference type="SMR" id="A8H1S7"/>
<dbReference type="STRING" id="398579.Spea_1187"/>
<dbReference type="KEGG" id="spl:Spea_1187"/>
<dbReference type="eggNOG" id="COG1211">
    <property type="taxonomic scope" value="Bacteria"/>
</dbReference>
<dbReference type="HOGENOM" id="CLU_061281_3_1_6"/>
<dbReference type="OrthoDB" id="9806837at2"/>
<dbReference type="UniPathway" id="UPA00056">
    <property type="reaction ID" value="UER00093"/>
</dbReference>
<dbReference type="Proteomes" id="UP000002608">
    <property type="component" value="Chromosome"/>
</dbReference>
<dbReference type="GO" id="GO:0050518">
    <property type="term" value="F:2-C-methyl-D-erythritol 4-phosphate cytidylyltransferase activity"/>
    <property type="evidence" value="ECO:0007669"/>
    <property type="project" value="UniProtKB-UniRule"/>
</dbReference>
<dbReference type="GO" id="GO:0019288">
    <property type="term" value="P:isopentenyl diphosphate biosynthetic process, methylerythritol 4-phosphate pathway"/>
    <property type="evidence" value="ECO:0007669"/>
    <property type="project" value="UniProtKB-UniRule"/>
</dbReference>
<dbReference type="CDD" id="cd02516">
    <property type="entry name" value="CDP-ME_synthetase"/>
    <property type="match status" value="1"/>
</dbReference>
<dbReference type="FunFam" id="3.90.550.10:FF:000003">
    <property type="entry name" value="2-C-methyl-D-erythritol 4-phosphate cytidylyltransferase"/>
    <property type="match status" value="1"/>
</dbReference>
<dbReference type="Gene3D" id="3.90.550.10">
    <property type="entry name" value="Spore Coat Polysaccharide Biosynthesis Protein SpsA, Chain A"/>
    <property type="match status" value="1"/>
</dbReference>
<dbReference type="HAMAP" id="MF_00108">
    <property type="entry name" value="IspD"/>
    <property type="match status" value="1"/>
</dbReference>
<dbReference type="InterPro" id="IPR001228">
    <property type="entry name" value="IspD"/>
</dbReference>
<dbReference type="InterPro" id="IPR034683">
    <property type="entry name" value="IspD/TarI"/>
</dbReference>
<dbReference type="InterPro" id="IPR050088">
    <property type="entry name" value="IspD/TarI_cytidylyltransf_bact"/>
</dbReference>
<dbReference type="InterPro" id="IPR029044">
    <property type="entry name" value="Nucleotide-diphossugar_trans"/>
</dbReference>
<dbReference type="NCBIfam" id="TIGR00453">
    <property type="entry name" value="ispD"/>
    <property type="match status" value="1"/>
</dbReference>
<dbReference type="PANTHER" id="PTHR32125">
    <property type="entry name" value="2-C-METHYL-D-ERYTHRITOL 4-PHOSPHATE CYTIDYLYLTRANSFERASE, CHLOROPLASTIC"/>
    <property type="match status" value="1"/>
</dbReference>
<dbReference type="PANTHER" id="PTHR32125:SF4">
    <property type="entry name" value="2-C-METHYL-D-ERYTHRITOL 4-PHOSPHATE CYTIDYLYLTRANSFERASE, CHLOROPLASTIC"/>
    <property type="match status" value="1"/>
</dbReference>
<dbReference type="Pfam" id="PF01128">
    <property type="entry name" value="IspD"/>
    <property type="match status" value="1"/>
</dbReference>
<dbReference type="SUPFAM" id="SSF53448">
    <property type="entry name" value="Nucleotide-diphospho-sugar transferases"/>
    <property type="match status" value="1"/>
</dbReference>
<reference key="1">
    <citation type="submission" date="2007-10" db="EMBL/GenBank/DDBJ databases">
        <title>Complete sequence of Shewanella pealeana ATCC 700345.</title>
        <authorList>
            <consortium name="US DOE Joint Genome Institute"/>
            <person name="Copeland A."/>
            <person name="Lucas S."/>
            <person name="Lapidus A."/>
            <person name="Barry K."/>
            <person name="Glavina del Rio T."/>
            <person name="Dalin E."/>
            <person name="Tice H."/>
            <person name="Pitluck S."/>
            <person name="Chertkov O."/>
            <person name="Brettin T."/>
            <person name="Bruce D."/>
            <person name="Detter J.C."/>
            <person name="Han C."/>
            <person name="Schmutz J."/>
            <person name="Larimer F."/>
            <person name="Land M."/>
            <person name="Hauser L."/>
            <person name="Kyrpides N."/>
            <person name="Kim E."/>
            <person name="Zhao J.-S.Z."/>
            <person name="Manno D."/>
            <person name="Hawari J."/>
            <person name="Richardson P."/>
        </authorList>
    </citation>
    <scope>NUCLEOTIDE SEQUENCE [LARGE SCALE GENOMIC DNA]</scope>
    <source>
        <strain>ATCC 700345 / ANG-SQ1</strain>
    </source>
</reference>
<organism>
    <name type="scientific">Shewanella pealeana (strain ATCC 700345 / ANG-SQ1)</name>
    <dbReference type="NCBI Taxonomy" id="398579"/>
    <lineage>
        <taxon>Bacteria</taxon>
        <taxon>Pseudomonadati</taxon>
        <taxon>Pseudomonadota</taxon>
        <taxon>Gammaproteobacteria</taxon>
        <taxon>Alteromonadales</taxon>
        <taxon>Shewanellaceae</taxon>
        <taxon>Shewanella</taxon>
    </lineage>
</organism>
<accession>A8H1S7</accession>
<gene>
    <name evidence="1" type="primary">ispD</name>
    <name type="ordered locus">Spea_1187</name>
</gene>
<evidence type="ECO:0000255" key="1">
    <source>
        <dbReference type="HAMAP-Rule" id="MF_00108"/>
    </source>
</evidence>
<protein>
    <recommendedName>
        <fullName evidence="1">2-C-methyl-D-erythritol 4-phosphate cytidylyltransferase</fullName>
        <ecNumber evidence="1">2.7.7.60</ecNumber>
    </recommendedName>
    <alternativeName>
        <fullName evidence="1">4-diphosphocytidyl-2C-methyl-D-erythritol synthase</fullName>
    </alternativeName>
    <alternativeName>
        <fullName evidence="1">MEP cytidylyltransferase</fullName>
        <shortName evidence="1">MCT</shortName>
    </alternativeName>
</protein>
<comment type="function">
    <text evidence="1">Catalyzes the formation of 4-diphosphocytidyl-2-C-methyl-D-erythritol from CTP and 2-C-methyl-D-erythritol 4-phosphate (MEP).</text>
</comment>
<comment type="catalytic activity">
    <reaction evidence="1">
        <text>2-C-methyl-D-erythritol 4-phosphate + CTP + H(+) = 4-CDP-2-C-methyl-D-erythritol + diphosphate</text>
        <dbReference type="Rhea" id="RHEA:13429"/>
        <dbReference type="ChEBI" id="CHEBI:15378"/>
        <dbReference type="ChEBI" id="CHEBI:33019"/>
        <dbReference type="ChEBI" id="CHEBI:37563"/>
        <dbReference type="ChEBI" id="CHEBI:57823"/>
        <dbReference type="ChEBI" id="CHEBI:58262"/>
        <dbReference type="EC" id="2.7.7.60"/>
    </reaction>
</comment>
<comment type="pathway">
    <text evidence="1">Isoprenoid biosynthesis; isopentenyl diphosphate biosynthesis via DXP pathway; isopentenyl diphosphate from 1-deoxy-D-xylulose 5-phosphate: step 2/6.</text>
</comment>
<comment type="similarity">
    <text evidence="1">Belongs to the IspD/TarI cytidylyltransferase family. IspD subfamily.</text>
</comment>
<proteinExistence type="inferred from homology"/>
<name>ISPD_SHEPA</name>
<keyword id="KW-0414">Isoprene biosynthesis</keyword>
<keyword id="KW-0548">Nucleotidyltransferase</keyword>
<keyword id="KW-1185">Reference proteome</keyword>
<keyword id="KW-0808">Transferase</keyword>